<name>SECA1_MYCPA</name>
<keyword id="KW-0067">ATP-binding</keyword>
<keyword id="KW-1003">Cell membrane</keyword>
<keyword id="KW-0963">Cytoplasm</keyword>
<keyword id="KW-0472">Membrane</keyword>
<keyword id="KW-0547">Nucleotide-binding</keyword>
<keyword id="KW-0653">Protein transport</keyword>
<keyword id="KW-1185">Reference proteome</keyword>
<keyword id="KW-1278">Translocase</keyword>
<keyword id="KW-0811">Translocation</keyword>
<keyword id="KW-0813">Transport</keyword>
<sequence length="940" mass="105244">MLSKLLRLGEGRMLKRLKRVADYVNTLSDEVEKLTDAELRAKTDEFKKRHADGESLDDLLPEAFAVAREAAWRVLDQRPFDVQVMGAAALHFGNVAEMKTGEGKTLTSVLPAYLNGIGGKGVHVVTVNDYLAKRDSEWMGRVHRFLGLDVGVILAQMTPDERRVAYNADITYGTNNEFGFDYLRDNMAHSLDDLVQRGHNFAIVDEVDSILIDEARTPLIISGPADGASNWYLEFARLAPLMEKDVHYEVDLRKRTVGVHELGVEFVEDQLGIDNLYEAANSPLVSYLNNALKAKELFHRDKDYIVRDGEVLIVDEFTGRVLYGRRYNEGMHQAIEAKEHVEIKAENQTLATITLQNYFRLYDKLSGMTGTAQTEAAELHEIYKLGVVPIPTNKPMIRTDQSDLIYKTEEAKYIAVVDDVVERYQKGQPVLIGTTSVERSEYLSRQFQKRRIPHNVLNAKYHEQEAGIVAVAGRRGGVTVATHMAGRGTDIVLGGNVDFLTDQRLRERGLDPVETPDEYEAAWHEELPKVKAEAAAEAKEVIEAGGLYVLGTERHESRRIDNQLRGRSGRQGDPGESRFYLSLGDELMRRFNGAALEAMLNRLNLPDDVPIEAKMVTRAIKSAQTQVEQQNFEVRKNVLKYDEVMNQQRKVIYAERRRILEGENLKEQALEMVRDVVTAYVNGATAEGYAEDWDLDALWTALKTLYPVGIDYATLTRRDADGGFDDLTREELLEALLKDAERAYATREAELEEIAGEGAMRQLERNVLLNVIDRKWREHLYEMDYLKEGIGLRAMAQRDPLVEYQREGYDMFMAMLDGMKEESVGFLFNVTVEAVPAPQVAPVQTPEGLAELGAPAEQGGTATAARDEAPTQLRAKGIDNEAPAMTYSGPSEDGSAQVQRNGGDAKTPAGVPAGASRRERRAAARQQGRGAKPPKSVKRR</sequence>
<proteinExistence type="inferred from homology"/>
<dbReference type="EC" id="7.4.2.8" evidence="1"/>
<dbReference type="EMBL" id="AE016958">
    <property type="protein sequence ID" value="AAS05904.1"/>
    <property type="molecule type" value="Genomic_DNA"/>
</dbReference>
<dbReference type="RefSeq" id="WP_010949934.1">
    <property type="nucleotide sequence ID" value="NC_002944.2"/>
</dbReference>
<dbReference type="SMR" id="Q73UL2"/>
<dbReference type="STRING" id="262316.MAP_3354c"/>
<dbReference type="KEGG" id="mpa:MAP_3354c"/>
<dbReference type="PATRIC" id="fig|262316.17.peg.3564"/>
<dbReference type="eggNOG" id="COG0653">
    <property type="taxonomic scope" value="Bacteria"/>
</dbReference>
<dbReference type="HOGENOM" id="CLU_005314_3_0_11"/>
<dbReference type="Proteomes" id="UP000000580">
    <property type="component" value="Chromosome"/>
</dbReference>
<dbReference type="GO" id="GO:0031522">
    <property type="term" value="C:cell envelope Sec protein transport complex"/>
    <property type="evidence" value="ECO:0007669"/>
    <property type="project" value="TreeGrafter"/>
</dbReference>
<dbReference type="GO" id="GO:0005829">
    <property type="term" value="C:cytosol"/>
    <property type="evidence" value="ECO:0007669"/>
    <property type="project" value="TreeGrafter"/>
</dbReference>
<dbReference type="GO" id="GO:0005886">
    <property type="term" value="C:plasma membrane"/>
    <property type="evidence" value="ECO:0007669"/>
    <property type="project" value="UniProtKB-SubCell"/>
</dbReference>
<dbReference type="GO" id="GO:0005524">
    <property type="term" value="F:ATP binding"/>
    <property type="evidence" value="ECO:0007669"/>
    <property type="project" value="UniProtKB-UniRule"/>
</dbReference>
<dbReference type="GO" id="GO:0008564">
    <property type="term" value="F:protein-exporting ATPase activity"/>
    <property type="evidence" value="ECO:0007669"/>
    <property type="project" value="UniProtKB-EC"/>
</dbReference>
<dbReference type="GO" id="GO:0065002">
    <property type="term" value="P:intracellular protein transmembrane transport"/>
    <property type="evidence" value="ECO:0007669"/>
    <property type="project" value="UniProtKB-UniRule"/>
</dbReference>
<dbReference type="GO" id="GO:0017038">
    <property type="term" value="P:protein import"/>
    <property type="evidence" value="ECO:0007669"/>
    <property type="project" value="InterPro"/>
</dbReference>
<dbReference type="GO" id="GO:0006605">
    <property type="term" value="P:protein targeting"/>
    <property type="evidence" value="ECO:0007669"/>
    <property type="project" value="UniProtKB-UniRule"/>
</dbReference>
<dbReference type="GO" id="GO:0043952">
    <property type="term" value="P:protein transport by the Sec complex"/>
    <property type="evidence" value="ECO:0007669"/>
    <property type="project" value="TreeGrafter"/>
</dbReference>
<dbReference type="CDD" id="cd17928">
    <property type="entry name" value="DEXDc_SecA"/>
    <property type="match status" value="1"/>
</dbReference>
<dbReference type="CDD" id="cd18803">
    <property type="entry name" value="SF2_C_secA"/>
    <property type="match status" value="1"/>
</dbReference>
<dbReference type="FunFam" id="1.10.3060.10:FF:000002">
    <property type="entry name" value="Preprotein translocase subunit SecA"/>
    <property type="match status" value="1"/>
</dbReference>
<dbReference type="FunFam" id="3.40.50.300:FF:000113">
    <property type="entry name" value="Preprotein translocase subunit SecA"/>
    <property type="match status" value="1"/>
</dbReference>
<dbReference type="FunFam" id="3.40.50.300:FF:000334">
    <property type="entry name" value="Protein translocase subunit SecA"/>
    <property type="match status" value="1"/>
</dbReference>
<dbReference type="FunFam" id="3.90.1440.10:FF:000002">
    <property type="entry name" value="Protein translocase subunit SecA"/>
    <property type="match status" value="1"/>
</dbReference>
<dbReference type="Gene3D" id="1.10.3060.10">
    <property type="entry name" value="Helical scaffold and wing domains of SecA"/>
    <property type="match status" value="1"/>
</dbReference>
<dbReference type="Gene3D" id="3.40.50.300">
    <property type="entry name" value="P-loop containing nucleotide triphosphate hydrolases"/>
    <property type="match status" value="2"/>
</dbReference>
<dbReference type="Gene3D" id="3.90.1440.10">
    <property type="entry name" value="SecA, preprotein cross-linking domain"/>
    <property type="match status" value="1"/>
</dbReference>
<dbReference type="HAMAP" id="MF_01382">
    <property type="entry name" value="SecA"/>
    <property type="match status" value="1"/>
</dbReference>
<dbReference type="InterPro" id="IPR014001">
    <property type="entry name" value="Helicase_ATP-bd"/>
</dbReference>
<dbReference type="InterPro" id="IPR001650">
    <property type="entry name" value="Helicase_C-like"/>
</dbReference>
<dbReference type="InterPro" id="IPR027417">
    <property type="entry name" value="P-loop_NTPase"/>
</dbReference>
<dbReference type="InterPro" id="IPR000185">
    <property type="entry name" value="SecA"/>
</dbReference>
<dbReference type="InterPro" id="IPR011115">
    <property type="entry name" value="SecA_DEAD"/>
</dbReference>
<dbReference type="InterPro" id="IPR014018">
    <property type="entry name" value="SecA_motor_DEAD"/>
</dbReference>
<dbReference type="InterPro" id="IPR011130">
    <property type="entry name" value="SecA_preprotein_X-link_dom"/>
</dbReference>
<dbReference type="InterPro" id="IPR044722">
    <property type="entry name" value="SecA_SF2_C"/>
</dbReference>
<dbReference type="InterPro" id="IPR011116">
    <property type="entry name" value="SecA_Wing/Scaffold"/>
</dbReference>
<dbReference type="InterPro" id="IPR036266">
    <property type="entry name" value="SecA_Wing/Scaffold_sf"/>
</dbReference>
<dbReference type="InterPro" id="IPR036670">
    <property type="entry name" value="SecA_X-link_sf"/>
</dbReference>
<dbReference type="NCBIfam" id="NF009538">
    <property type="entry name" value="PRK12904.1"/>
    <property type="match status" value="1"/>
</dbReference>
<dbReference type="NCBIfam" id="TIGR00963">
    <property type="entry name" value="secA"/>
    <property type="match status" value="1"/>
</dbReference>
<dbReference type="PANTHER" id="PTHR30612:SF0">
    <property type="entry name" value="CHLOROPLAST PROTEIN-TRANSPORTING ATPASE"/>
    <property type="match status" value="1"/>
</dbReference>
<dbReference type="PANTHER" id="PTHR30612">
    <property type="entry name" value="SECA INNER MEMBRANE COMPONENT OF SEC PROTEIN SECRETION SYSTEM"/>
    <property type="match status" value="1"/>
</dbReference>
<dbReference type="Pfam" id="PF21090">
    <property type="entry name" value="P-loop_SecA"/>
    <property type="match status" value="1"/>
</dbReference>
<dbReference type="Pfam" id="PF07517">
    <property type="entry name" value="SecA_DEAD"/>
    <property type="match status" value="1"/>
</dbReference>
<dbReference type="Pfam" id="PF01043">
    <property type="entry name" value="SecA_PP_bind"/>
    <property type="match status" value="1"/>
</dbReference>
<dbReference type="Pfam" id="PF07516">
    <property type="entry name" value="SecA_SW"/>
    <property type="match status" value="1"/>
</dbReference>
<dbReference type="PRINTS" id="PR00906">
    <property type="entry name" value="SECA"/>
</dbReference>
<dbReference type="SMART" id="SM00957">
    <property type="entry name" value="SecA_DEAD"/>
    <property type="match status" value="1"/>
</dbReference>
<dbReference type="SMART" id="SM00958">
    <property type="entry name" value="SecA_PP_bind"/>
    <property type="match status" value="1"/>
</dbReference>
<dbReference type="SUPFAM" id="SSF81886">
    <property type="entry name" value="Helical scaffold and wing domains of SecA"/>
    <property type="match status" value="1"/>
</dbReference>
<dbReference type="SUPFAM" id="SSF52540">
    <property type="entry name" value="P-loop containing nucleoside triphosphate hydrolases"/>
    <property type="match status" value="2"/>
</dbReference>
<dbReference type="SUPFAM" id="SSF81767">
    <property type="entry name" value="Pre-protein crosslinking domain of SecA"/>
    <property type="match status" value="1"/>
</dbReference>
<dbReference type="PROSITE" id="PS51196">
    <property type="entry name" value="SECA_MOTOR_DEAD"/>
    <property type="match status" value="1"/>
</dbReference>
<organism>
    <name type="scientific">Mycolicibacterium paratuberculosis (strain ATCC BAA-968 / K-10)</name>
    <name type="common">Mycobacterium paratuberculosis</name>
    <dbReference type="NCBI Taxonomy" id="262316"/>
    <lineage>
        <taxon>Bacteria</taxon>
        <taxon>Bacillati</taxon>
        <taxon>Actinomycetota</taxon>
        <taxon>Actinomycetes</taxon>
        <taxon>Mycobacteriales</taxon>
        <taxon>Mycobacteriaceae</taxon>
        <taxon>Mycobacterium</taxon>
        <taxon>Mycobacterium avium complex (MAC)</taxon>
    </lineage>
</organism>
<evidence type="ECO:0000255" key="1">
    <source>
        <dbReference type="HAMAP-Rule" id="MF_01382"/>
    </source>
</evidence>
<evidence type="ECO:0000256" key="2">
    <source>
        <dbReference type="SAM" id="MobiDB-lite"/>
    </source>
</evidence>
<feature type="chain" id="PRO_0000318380" description="Protein translocase subunit SecA 1">
    <location>
        <begin position="1"/>
        <end position="940"/>
    </location>
</feature>
<feature type="region of interest" description="Disordered" evidence="2">
    <location>
        <begin position="856"/>
        <end position="940"/>
    </location>
</feature>
<feature type="binding site" evidence="1">
    <location>
        <position position="83"/>
    </location>
    <ligand>
        <name>ATP</name>
        <dbReference type="ChEBI" id="CHEBI:30616"/>
    </ligand>
</feature>
<feature type="binding site" evidence="1">
    <location>
        <begin position="101"/>
        <end position="105"/>
    </location>
    <ligand>
        <name>ATP</name>
        <dbReference type="ChEBI" id="CHEBI:30616"/>
    </ligand>
</feature>
<feature type="binding site" evidence="1">
    <location>
        <position position="490"/>
    </location>
    <ligand>
        <name>ATP</name>
        <dbReference type="ChEBI" id="CHEBI:30616"/>
    </ligand>
</feature>
<protein>
    <recommendedName>
        <fullName evidence="1">Protein translocase subunit SecA 1</fullName>
        <ecNumber evidence="1">7.4.2.8</ecNumber>
    </recommendedName>
</protein>
<reference key="1">
    <citation type="journal article" date="2005" name="Proc. Natl. Acad. Sci. U.S.A.">
        <title>The complete genome sequence of Mycobacterium avium subspecies paratuberculosis.</title>
        <authorList>
            <person name="Li L."/>
            <person name="Bannantine J.P."/>
            <person name="Zhang Q."/>
            <person name="Amonsin A."/>
            <person name="May B.J."/>
            <person name="Alt D."/>
            <person name="Banerji N."/>
            <person name="Kanjilal S."/>
            <person name="Kapur V."/>
        </authorList>
    </citation>
    <scope>NUCLEOTIDE SEQUENCE [LARGE SCALE GENOMIC DNA]</scope>
    <source>
        <strain>ATCC BAA-968 / K-10</strain>
    </source>
</reference>
<gene>
    <name evidence="1" type="primary">secA1</name>
    <name type="ordered locus">MAP_3354c</name>
</gene>
<comment type="function">
    <text evidence="1">Part of the Sec protein translocase complex. Interacts with the SecYEG preprotein conducting channel. Has a central role in coupling the hydrolysis of ATP to the transfer of proteins into and across the cell membrane, serving as an ATP-driven molecular motor driving the stepwise translocation of polypeptide chains across the membrane.</text>
</comment>
<comment type="catalytic activity">
    <reaction evidence="1">
        <text>ATP + H2O + cellular proteinSide 1 = ADP + phosphate + cellular proteinSide 2.</text>
        <dbReference type="EC" id="7.4.2.8"/>
    </reaction>
</comment>
<comment type="subunit">
    <text evidence="1">Monomer and homodimer. Part of the essential Sec protein translocation apparatus which comprises SecA, SecYEG and auxiliary proteins SecDF. Other proteins may also be involved.</text>
</comment>
<comment type="subcellular location">
    <subcellularLocation>
        <location evidence="1">Cell membrane</location>
        <topology evidence="1">Peripheral membrane protein</topology>
        <orientation evidence="1">Cytoplasmic side</orientation>
    </subcellularLocation>
    <subcellularLocation>
        <location evidence="1">Cytoplasm</location>
    </subcellularLocation>
    <text evidence="1">Distribution is 50-50.</text>
</comment>
<comment type="similarity">
    <text evidence="1">Belongs to the SecA family.</text>
</comment>
<accession>Q73UL2</accession>